<evidence type="ECO:0000250" key="1"/>
<evidence type="ECO:0000255" key="2">
    <source>
        <dbReference type="PROSITE-ProRule" id="PRU00532"/>
    </source>
</evidence>
<evidence type="ECO:0000305" key="3"/>
<proteinExistence type="inferred from homology"/>
<accession>Q757N6</accession>
<protein>
    <recommendedName>
        <fullName>N-acetyltransferase ECO1</fullName>
        <ecNumber>2.3.1.-</ecNumber>
    </recommendedName>
    <alternativeName>
        <fullName>Establishment of cohesion protein 1</fullName>
    </alternativeName>
</protein>
<keyword id="KW-0012">Acyltransferase</keyword>
<keyword id="KW-0131">Cell cycle</keyword>
<keyword id="KW-0479">Metal-binding</keyword>
<keyword id="KW-0539">Nucleus</keyword>
<keyword id="KW-1185">Reference proteome</keyword>
<keyword id="KW-0808">Transferase</keyword>
<keyword id="KW-0862">Zinc</keyword>
<keyword id="KW-0863">Zinc-finger</keyword>
<gene>
    <name type="primary">ECO1</name>
    <name type="ordered locus">AEL024C</name>
</gene>
<name>ECO1_EREGS</name>
<reference key="1">
    <citation type="journal article" date="2004" name="Science">
        <title>The Ashbya gossypii genome as a tool for mapping the ancient Saccharomyces cerevisiae genome.</title>
        <authorList>
            <person name="Dietrich F.S."/>
            <person name="Voegeli S."/>
            <person name="Brachat S."/>
            <person name="Lerch A."/>
            <person name="Gates K."/>
            <person name="Steiner S."/>
            <person name="Mohr C."/>
            <person name="Poehlmann R."/>
            <person name="Luedi P."/>
            <person name="Choi S."/>
            <person name="Wing R.A."/>
            <person name="Flavier A."/>
            <person name="Gaffney T.D."/>
            <person name="Philippsen P."/>
        </authorList>
    </citation>
    <scope>NUCLEOTIDE SEQUENCE [LARGE SCALE GENOMIC DNA]</scope>
    <source>
        <strain>ATCC 10895 / CBS 109.51 / FGSC 9923 / NRRL Y-1056</strain>
    </source>
</reference>
<reference key="2">
    <citation type="journal article" date="2013" name="G3 (Bethesda)">
        <title>Genomes of Ashbya fungi isolated from insects reveal four mating-type loci, numerous translocations, lack of transposons, and distinct gene duplications.</title>
        <authorList>
            <person name="Dietrich F.S."/>
            <person name="Voegeli S."/>
            <person name="Kuo S."/>
            <person name="Philippsen P."/>
        </authorList>
    </citation>
    <scope>GENOME REANNOTATION</scope>
    <scope>SEQUENCE REVISION TO 164</scope>
    <source>
        <strain>ATCC 10895 / CBS 109.51 / FGSC 9923 / NRRL Y-1056</strain>
    </source>
</reference>
<organism>
    <name type="scientific">Eremothecium gossypii (strain ATCC 10895 / CBS 109.51 / FGSC 9923 / NRRL Y-1056)</name>
    <name type="common">Yeast</name>
    <name type="synonym">Ashbya gossypii</name>
    <dbReference type="NCBI Taxonomy" id="284811"/>
    <lineage>
        <taxon>Eukaryota</taxon>
        <taxon>Fungi</taxon>
        <taxon>Dikarya</taxon>
        <taxon>Ascomycota</taxon>
        <taxon>Saccharomycotina</taxon>
        <taxon>Saccharomycetes</taxon>
        <taxon>Saccharomycetales</taxon>
        <taxon>Saccharomycetaceae</taxon>
        <taxon>Eremothecium</taxon>
    </lineage>
</organism>
<feature type="chain" id="PRO_0000074545" description="N-acetyltransferase ECO1">
    <location>
        <begin position="1"/>
        <end position="266"/>
    </location>
</feature>
<feature type="domain" description="N-acetyltransferase" evidence="2">
    <location>
        <begin position="108"/>
        <end position="266"/>
    </location>
</feature>
<feature type="zinc finger region" description="CCHH-type">
    <location>
        <begin position="31"/>
        <end position="55"/>
    </location>
</feature>
<comment type="function">
    <text evidence="1">Probable acetyltransferase required for the establishment of sister chromatid cohesion and couple the processes of cohesion and DNA replication to ensure that only sister chromatids become paired together. In contrast to the structural cohesins, the deposition and establishment factors are required only during S phase. Acts by acetylating the cohesin complex component SMC3 (By similarity).</text>
</comment>
<comment type="subcellular location">
    <subcellularLocation>
        <location evidence="1">Nucleus</location>
    </subcellularLocation>
</comment>
<comment type="similarity">
    <text evidence="3">Belongs to the acetyltransferase family. ECO subfamily.</text>
</comment>
<sequence length="266" mass="29944">MAGVKKNRSPRKPTKLLQSRLKFAHSSATLKKCTECQMSYIIDSPADCAEHKKYHDLHLYGKKWLASWGTAIQDTCSSQYITPPSTSGGNASGNGAKADREDYIVYITPGKTAEVKAMMEIMYIVNNELTAPHDENDFWSEEGTSSMGRAFVYIKDGRAVGAITVEYLKEDDSRGRWMRVSTRELVPEVVPRVRLGISRIWVCRKQRGQGIATRLLECVRKYAILGNEVARWEMAWSQPSESGGKLATRYNSVRHKSGELLIPCYI</sequence>
<dbReference type="EC" id="2.3.1.-"/>
<dbReference type="EMBL" id="AE016818">
    <property type="protein sequence ID" value="AAS52661.2"/>
    <property type="molecule type" value="Genomic_DNA"/>
</dbReference>
<dbReference type="RefSeq" id="NP_984837.2">
    <property type="nucleotide sequence ID" value="NM_210191.2"/>
</dbReference>
<dbReference type="SMR" id="Q757N6"/>
<dbReference type="FunCoup" id="Q757N6">
    <property type="interactions" value="41"/>
</dbReference>
<dbReference type="STRING" id="284811.Q757N6"/>
<dbReference type="EnsemblFungi" id="AAS52661">
    <property type="protein sequence ID" value="AAS52661"/>
    <property type="gene ID" value="AGOS_AEL024C"/>
</dbReference>
<dbReference type="GeneID" id="4621035"/>
<dbReference type="KEGG" id="ago:AGOS_AEL024C"/>
<dbReference type="eggNOG" id="KOG3014">
    <property type="taxonomic scope" value="Eukaryota"/>
</dbReference>
<dbReference type="HOGENOM" id="CLU_039183_2_1_1"/>
<dbReference type="InParanoid" id="Q757N6"/>
<dbReference type="OMA" id="PSITHQE"/>
<dbReference type="OrthoDB" id="428854at2759"/>
<dbReference type="Proteomes" id="UP000000591">
    <property type="component" value="Chromosome V"/>
</dbReference>
<dbReference type="GO" id="GO:0000785">
    <property type="term" value="C:chromatin"/>
    <property type="evidence" value="ECO:0000318"/>
    <property type="project" value="GO_Central"/>
</dbReference>
<dbReference type="GO" id="GO:0043596">
    <property type="term" value="C:nuclear replication fork"/>
    <property type="evidence" value="ECO:0007669"/>
    <property type="project" value="EnsemblFungi"/>
</dbReference>
<dbReference type="GO" id="GO:0005634">
    <property type="term" value="C:nucleus"/>
    <property type="evidence" value="ECO:0000318"/>
    <property type="project" value="GO_Central"/>
</dbReference>
<dbReference type="GO" id="GO:0003682">
    <property type="term" value="F:chromatin binding"/>
    <property type="evidence" value="ECO:0007669"/>
    <property type="project" value="EnsemblFungi"/>
</dbReference>
<dbReference type="GO" id="GO:0061733">
    <property type="term" value="F:protein-lysine-acetyltransferase activity"/>
    <property type="evidence" value="ECO:0000318"/>
    <property type="project" value="GO_Central"/>
</dbReference>
<dbReference type="GO" id="GO:0008270">
    <property type="term" value="F:zinc ion binding"/>
    <property type="evidence" value="ECO:0007669"/>
    <property type="project" value="UniProtKB-KW"/>
</dbReference>
<dbReference type="GO" id="GO:0140588">
    <property type="term" value="P:chromatin looping"/>
    <property type="evidence" value="ECO:0007669"/>
    <property type="project" value="EnsemblFungi"/>
</dbReference>
<dbReference type="GO" id="GO:0006260">
    <property type="term" value="P:DNA replication"/>
    <property type="evidence" value="ECO:0007669"/>
    <property type="project" value="EnsemblFungi"/>
</dbReference>
<dbReference type="GO" id="GO:0006302">
    <property type="term" value="P:double-strand break repair"/>
    <property type="evidence" value="ECO:0007669"/>
    <property type="project" value="EnsemblFungi"/>
</dbReference>
<dbReference type="GO" id="GO:0034089">
    <property type="term" value="P:establishment of meiotic sister chromatid cohesion"/>
    <property type="evidence" value="ECO:0007669"/>
    <property type="project" value="EnsemblFungi"/>
</dbReference>
<dbReference type="GO" id="GO:0034087">
    <property type="term" value="P:establishment of mitotic sister chromatid cohesion"/>
    <property type="evidence" value="ECO:0007669"/>
    <property type="project" value="EnsemblFungi"/>
</dbReference>
<dbReference type="GO" id="GO:0007076">
    <property type="term" value="P:mitotic chromosome condensation"/>
    <property type="evidence" value="ECO:0007669"/>
    <property type="project" value="EnsemblFungi"/>
</dbReference>
<dbReference type="GO" id="GO:0007064">
    <property type="term" value="P:mitotic sister chromatid cohesion"/>
    <property type="evidence" value="ECO:0000318"/>
    <property type="project" value="GO_Central"/>
</dbReference>
<dbReference type="GO" id="GO:0007088">
    <property type="term" value="P:regulation of mitotic nuclear division"/>
    <property type="evidence" value="ECO:0007669"/>
    <property type="project" value="EnsemblFungi"/>
</dbReference>
<dbReference type="GO" id="GO:0032200">
    <property type="term" value="P:telomere organization"/>
    <property type="evidence" value="ECO:0007669"/>
    <property type="project" value="EnsemblFungi"/>
</dbReference>
<dbReference type="GO" id="GO:0070058">
    <property type="term" value="P:tRNA gene clustering"/>
    <property type="evidence" value="ECO:0007669"/>
    <property type="project" value="EnsemblFungi"/>
</dbReference>
<dbReference type="CDD" id="cd04301">
    <property type="entry name" value="NAT_SF"/>
    <property type="match status" value="1"/>
</dbReference>
<dbReference type="Gene3D" id="3.40.630.30">
    <property type="match status" value="1"/>
</dbReference>
<dbReference type="InterPro" id="IPR028005">
    <property type="entry name" value="AcTrfase_ESCO_Znf_dom"/>
</dbReference>
<dbReference type="InterPro" id="IPR016181">
    <property type="entry name" value="Acyl_CoA_acyltransferase"/>
</dbReference>
<dbReference type="InterPro" id="IPR028009">
    <property type="entry name" value="ESCO_Acetyltransf_dom"/>
</dbReference>
<dbReference type="InterPro" id="IPR000182">
    <property type="entry name" value="GNAT_dom"/>
</dbReference>
<dbReference type="PANTHER" id="PTHR45884">
    <property type="entry name" value="N-ACETYLTRANSFERASE ECO"/>
    <property type="match status" value="1"/>
</dbReference>
<dbReference type="PANTHER" id="PTHR45884:SF2">
    <property type="entry name" value="N-ACETYLTRANSFERASE ECO"/>
    <property type="match status" value="1"/>
</dbReference>
<dbReference type="Pfam" id="PF13880">
    <property type="entry name" value="Acetyltransf_13"/>
    <property type="match status" value="1"/>
</dbReference>
<dbReference type="Pfam" id="PF13878">
    <property type="entry name" value="zf-C2H2_3"/>
    <property type="match status" value="1"/>
</dbReference>
<dbReference type="SUPFAM" id="SSF55729">
    <property type="entry name" value="Acyl-CoA N-acyltransferases (Nat)"/>
    <property type="match status" value="1"/>
</dbReference>
<dbReference type="PROSITE" id="PS51186">
    <property type="entry name" value="GNAT"/>
    <property type="match status" value="1"/>
</dbReference>